<proteinExistence type="inferred from homology"/>
<protein>
    <recommendedName>
        <fullName evidence="1">Small ribosomal subunit protein uS9</fullName>
    </recommendedName>
    <alternativeName>
        <fullName evidence="3">30S ribosomal protein S9</fullName>
    </alternativeName>
</protein>
<dbReference type="EMBL" id="AP009351">
    <property type="protein sequence ID" value="BAF68391.1"/>
    <property type="molecule type" value="Genomic_DNA"/>
</dbReference>
<dbReference type="RefSeq" id="WP_001790547.1">
    <property type="nucleotide sequence ID" value="NZ_JBBIAE010000006.1"/>
</dbReference>
<dbReference type="SMR" id="A6QJ59"/>
<dbReference type="GeneID" id="98346529"/>
<dbReference type="KEGG" id="sae:NWMN_2119"/>
<dbReference type="HOGENOM" id="CLU_046483_2_1_9"/>
<dbReference type="Proteomes" id="UP000006386">
    <property type="component" value="Chromosome"/>
</dbReference>
<dbReference type="GO" id="GO:0022627">
    <property type="term" value="C:cytosolic small ribosomal subunit"/>
    <property type="evidence" value="ECO:0007669"/>
    <property type="project" value="TreeGrafter"/>
</dbReference>
<dbReference type="GO" id="GO:0003723">
    <property type="term" value="F:RNA binding"/>
    <property type="evidence" value="ECO:0007669"/>
    <property type="project" value="TreeGrafter"/>
</dbReference>
<dbReference type="GO" id="GO:0003735">
    <property type="term" value="F:structural constituent of ribosome"/>
    <property type="evidence" value="ECO:0007669"/>
    <property type="project" value="InterPro"/>
</dbReference>
<dbReference type="GO" id="GO:0006412">
    <property type="term" value="P:translation"/>
    <property type="evidence" value="ECO:0007669"/>
    <property type="project" value="UniProtKB-UniRule"/>
</dbReference>
<dbReference type="FunFam" id="3.30.230.10:FF:000001">
    <property type="entry name" value="30S ribosomal protein S9"/>
    <property type="match status" value="1"/>
</dbReference>
<dbReference type="Gene3D" id="3.30.230.10">
    <property type="match status" value="1"/>
</dbReference>
<dbReference type="HAMAP" id="MF_00532_B">
    <property type="entry name" value="Ribosomal_uS9_B"/>
    <property type="match status" value="1"/>
</dbReference>
<dbReference type="InterPro" id="IPR020568">
    <property type="entry name" value="Ribosomal_Su5_D2-typ_SF"/>
</dbReference>
<dbReference type="InterPro" id="IPR000754">
    <property type="entry name" value="Ribosomal_uS9"/>
</dbReference>
<dbReference type="InterPro" id="IPR023035">
    <property type="entry name" value="Ribosomal_uS9_bac/plastid"/>
</dbReference>
<dbReference type="InterPro" id="IPR020574">
    <property type="entry name" value="Ribosomal_uS9_CS"/>
</dbReference>
<dbReference type="InterPro" id="IPR014721">
    <property type="entry name" value="Ribsml_uS5_D2-typ_fold_subgr"/>
</dbReference>
<dbReference type="NCBIfam" id="NF001099">
    <property type="entry name" value="PRK00132.1"/>
    <property type="match status" value="1"/>
</dbReference>
<dbReference type="PANTHER" id="PTHR21569">
    <property type="entry name" value="RIBOSOMAL PROTEIN S9"/>
    <property type="match status" value="1"/>
</dbReference>
<dbReference type="PANTHER" id="PTHR21569:SF1">
    <property type="entry name" value="SMALL RIBOSOMAL SUBUNIT PROTEIN US9M"/>
    <property type="match status" value="1"/>
</dbReference>
<dbReference type="Pfam" id="PF00380">
    <property type="entry name" value="Ribosomal_S9"/>
    <property type="match status" value="1"/>
</dbReference>
<dbReference type="SUPFAM" id="SSF54211">
    <property type="entry name" value="Ribosomal protein S5 domain 2-like"/>
    <property type="match status" value="1"/>
</dbReference>
<dbReference type="PROSITE" id="PS00360">
    <property type="entry name" value="RIBOSOMAL_S9"/>
    <property type="match status" value="1"/>
</dbReference>
<sequence length="130" mass="14616">MAQVEYRGTGRRKNSVARVRLVPGEGNITVNNRDVREYLPFESLILDLNQPFDVTETKGNYDVLVNVHGGGFTGQAQAIRHGIARALLEADPEYRGSLKRAGLLTRDPRMKERKKPGLKAARRSPQFSKR</sequence>
<reference key="1">
    <citation type="journal article" date="2008" name="J. Bacteriol.">
        <title>Genome sequence of Staphylococcus aureus strain Newman and comparative analysis of staphylococcal genomes: polymorphism and evolution of two major pathogenicity islands.</title>
        <authorList>
            <person name="Baba T."/>
            <person name="Bae T."/>
            <person name="Schneewind O."/>
            <person name="Takeuchi F."/>
            <person name="Hiramatsu K."/>
        </authorList>
    </citation>
    <scope>NUCLEOTIDE SEQUENCE [LARGE SCALE GENOMIC DNA]</scope>
    <source>
        <strain>Newman</strain>
    </source>
</reference>
<gene>
    <name evidence="1" type="primary">rpsI</name>
    <name type="ordered locus">NWMN_2119</name>
</gene>
<feature type="chain" id="PRO_1000072525" description="Small ribosomal subunit protein uS9">
    <location>
        <begin position="1"/>
        <end position="130"/>
    </location>
</feature>
<feature type="region of interest" description="Disordered" evidence="2">
    <location>
        <begin position="99"/>
        <end position="130"/>
    </location>
</feature>
<feature type="compositionally biased region" description="Basic residues" evidence="2">
    <location>
        <begin position="111"/>
        <end position="130"/>
    </location>
</feature>
<accession>A6QJ59</accession>
<keyword id="KW-0687">Ribonucleoprotein</keyword>
<keyword id="KW-0689">Ribosomal protein</keyword>
<organism>
    <name type="scientific">Staphylococcus aureus (strain Newman)</name>
    <dbReference type="NCBI Taxonomy" id="426430"/>
    <lineage>
        <taxon>Bacteria</taxon>
        <taxon>Bacillati</taxon>
        <taxon>Bacillota</taxon>
        <taxon>Bacilli</taxon>
        <taxon>Bacillales</taxon>
        <taxon>Staphylococcaceae</taxon>
        <taxon>Staphylococcus</taxon>
    </lineage>
</organism>
<evidence type="ECO:0000255" key="1">
    <source>
        <dbReference type="HAMAP-Rule" id="MF_00532"/>
    </source>
</evidence>
<evidence type="ECO:0000256" key="2">
    <source>
        <dbReference type="SAM" id="MobiDB-lite"/>
    </source>
</evidence>
<evidence type="ECO:0000305" key="3"/>
<name>RS9_STAAE</name>
<comment type="similarity">
    <text evidence="1">Belongs to the universal ribosomal protein uS9 family.</text>
</comment>